<organism>
    <name type="scientific">Bradyrhizobium sp. (strain BTAi1 / ATCC BAA-1182)</name>
    <dbReference type="NCBI Taxonomy" id="288000"/>
    <lineage>
        <taxon>Bacteria</taxon>
        <taxon>Pseudomonadati</taxon>
        <taxon>Pseudomonadota</taxon>
        <taxon>Alphaproteobacteria</taxon>
        <taxon>Hyphomicrobiales</taxon>
        <taxon>Nitrobacteraceae</taxon>
        <taxon>Bradyrhizobium</taxon>
    </lineage>
</organism>
<protein>
    <recommendedName>
        <fullName evidence="1">Small ribosomal subunit protein bS18</fullName>
    </recommendedName>
    <alternativeName>
        <fullName evidence="2">30S ribosomal protein S18</fullName>
    </alternativeName>
</protein>
<reference key="1">
    <citation type="journal article" date="2007" name="Science">
        <title>Legumes symbioses: absence of nod genes in photosynthetic bradyrhizobia.</title>
        <authorList>
            <person name="Giraud E."/>
            <person name="Moulin L."/>
            <person name="Vallenet D."/>
            <person name="Barbe V."/>
            <person name="Cytryn E."/>
            <person name="Avarre J.-C."/>
            <person name="Jaubert M."/>
            <person name="Simon D."/>
            <person name="Cartieaux F."/>
            <person name="Prin Y."/>
            <person name="Bena G."/>
            <person name="Hannibal L."/>
            <person name="Fardoux J."/>
            <person name="Kojadinovic M."/>
            <person name="Vuillet L."/>
            <person name="Lajus A."/>
            <person name="Cruveiller S."/>
            <person name="Rouy Z."/>
            <person name="Mangenot S."/>
            <person name="Segurens B."/>
            <person name="Dossat C."/>
            <person name="Franck W.L."/>
            <person name="Chang W.-S."/>
            <person name="Saunders E."/>
            <person name="Bruce D."/>
            <person name="Richardson P."/>
            <person name="Normand P."/>
            <person name="Dreyfus B."/>
            <person name="Pignol D."/>
            <person name="Stacey G."/>
            <person name="Emerich D."/>
            <person name="Vermeglio A."/>
            <person name="Medigue C."/>
            <person name="Sadowsky M."/>
        </authorList>
    </citation>
    <scope>NUCLEOTIDE SEQUENCE [LARGE SCALE GENOMIC DNA]</scope>
    <source>
        <strain>BTAi1 / ATCC BAA-1182</strain>
    </source>
</reference>
<gene>
    <name evidence="1" type="primary">rpsR</name>
    <name type="ordered locus">BBta_3814</name>
</gene>
<comment type="function">
    <text evidence="1">Binds as a heterodimer with protein bS6 to the central domain of the 16S rRNA, where it helps stabilize the platform of the 30S subunit.</text>
</comment>
<comment type="subunit">
    <text evidence="1">Part of the 30S ribosomal subunit. Forms a tight heterodimer with protein bS6.</text>
</comment>
<comment type="similarity">
    <text evidence="1">Belongs to the bacterial ribosomal protein bS18 family.</text>
</comment>
<feature type="chain" id="PRO_1000003451" description="Small ribosomal subunit protein bS18">
    <location>
        <begin position="1"/>
        <end position="79"/>
    </location>
</feature>
<sequence length="79" mass="9147">MAEAPARRPFFRRRKTCPFSGPNAPKIDYKDSKLLMRYVSERGKIVPSRITAVSAKKQRELARAIKRARFLGLLPYVIR</sequence>
<accession>A5EI97</accession>
<dbReference type="EMBL" id="CP000494">
    <property type="protein sequence ID" value="ABQ35891.1"/>
    <property type="molecule type" value="Genomic_DNA"/>
</dbReference>
<dbReference type="RefSeq" id="WP_008963441.1">
    <property type="nucleotide sequence ID" value="NC_009485.1"/>
</dbReference>
<dbReference type="SMR" id="A5EI97"/>
<dbReference type="STRING" id="288000.BBta_3814"/>
<dbReference type="KEGG" id="bbt:BBta_3814"/>
<dbReference type="eggNOG" id="COG0238">
    <property type="taxonomic scope" value="Bacteria"/>
</dbReference>
<dbReference type="HOGENOM" id="CLU_148710_2_3_5"/>
<dbReference type="OrthoDB" id="9812008at2"/>
<dbReference type="Proteomes" id="UP000000246">
    <property type="component" value="Chromosome"/>
</dbReference>
<dbReference type="GO" id="GO:0022627">
    <property type="term" value="C:cytosolic small ribosomal subunit"/>
    <property type="evidence" value="ECO:0007669"/>
    <property type="project" value="TreeGrafter"/>
</dbReference>
<dbReference type="GO" id="GO:0070181">
    <property type="term" value="F:small ribosomal subunit rRNA binding"/>
    <property type="evidence" value="ECO:0007669"/>
    <property type="project" value="TreeGrafter"/>
</dbReference>
<dbReference type="GO" id="GO:0003735">
    <property type="term" value="F:structural constituent of ribosome"/>
    <property type="evidence" value="ECO:0007669"/>
    <property type="project" value="InterPro"/>
</dbReference>
<dbReference type="GO" id="GO:0006412">
    <property type="term" value="P:translation"/>
    <property type="evidence" value="ECO:0007669"/>
    <property type="project" value="UniProtKB-UniRule"/>
</dbReference>
<dbReference type="FunFam" id="4.10.640.10:FF:000006">
    <property type="entry name" value="30S ribosomal protein S18"/>
    <property type="match status" value="1"/>
</dbReference>
<dbReference type="Gene3D" id="4.10.640.10">
    <property type="entry name" value="Ribosomal protein S18"/>
    <property type="match status" value="1"/>
</dbReference>
<dbReference type="HAMAP" id="MF_00270">
    <property type="entry name" value="Ribosomal_bS18"/>
    <property type="match status" value="1"/>
</dbReference>
<dbReference type="InterPro" id="IPR001648">
    <property type="entry name" value="Ribosomal_bS18"/>
</dbReference>
<dbReference type="InterPro" id="IPR018275">
    <property type="entry name" value="Ribosomal_bS18_CS"/>
</dbReference>
<dbReference type="InterPro" id="IPR036870">
    <property type="entry name" value="Ribosomal_bS18_sf"/>
</dbReference>
<dbReference type="NCBIfam" id="TIGR00165">
    <property type="entry name" value="S18"/>
    <property type="match status" value="1"/>
</dbReference>
<dbReference type="PANTHER" id="PTHR13479">
    <property type="entry name" value="30S RIBOSOMAL PROTEIN S18"/>
    <property type="match status" value="1"/>
</dbReference>
<dbReference type="PANTHER" id="PTHR13479:SF40">
    <property type="entry name" value="SMALL RIBOSOMAL SUBUNIT PROTEIN BS18M"/>
    <property type="match status" value="1"/>
</dbReference>
<dbReference type="Pfam" id="PF01084">
    <property type="entry name" value="Ribosomal_S18"/>
    <property type="match status" value="1"/>
</dbReference>
<dbReference type="PRINTS" id="PR00974">
    <property type="entry name" value="RIBOSOMALS18"/>
</dbReference>
<dbReference type="SUPFAM" id="SSF46911">
    <property type="entry name" value="Ribosomal protein S18"/>
    <property type="match status" value="1"/>
</dbReference>
<dbReference type="PROSITE" id="PS00057">
    <property type="entry name" value="RIBOSOMAL_S18"/>
    <property type="match status" value="1"/>
</dbReference>
<keyword id="KW-1185">Reference proteome</keyword>
<keyword id="KW-0687">Ribonucleoprotein</keyword>
<keyword id="KW-0689">Ribosomal protein</keyword>
<keyword id="KW-0694">RNA-binding</keyword>
<keyword id="KW-0699">rRNA-binding</keyword>
<proteinExistence type="inferred from homology"/>
<name>RS18_BRASB</name>
<evidence type="ECO:0000255" key="1">
    <source>
        <dbReference type="HAMAP-Rule" id="MF_00270"/>
    </source>
</evidence>
<evidence type="ECO:0000305" key="2"/>